<comment type="function">
    <text evidence="1">Assembly factor required for Rieske Fe-S protein RIP1 incorporation into the cytochrome b-c1 (CIII) complex. Functions as a chaperone, binding to this subunit within the mitochondrial matrix and stabilizing it prior to its translocation and insertion into the late CIII dimeric intermediate within the mitochondrial inner membrane. Modulates the mitochondrial matrix zinc pool (By similarity).</text>
</comment>
<comment type="subunit">
    <text evidence="1">Interacts with RIP1.</text>
</comment>
<comment type="subcellular location">
    <subcellularLocation>
        <location evidence="1">Mitochondrion matrix</location>
    </subcellularLocation>
</comment>
<comment type="similarity">
    <text evidence="4">Belongs to the complex I LYR family. MZM1 subfamily.</text>
</comment>
<keyword id="KW-0143">Chaperone</keyword>
<keyword id="KW-0496">Mitochondrion</keyword>
<keyword id="KW-1185">Reference proteome</keyword>
<keyword id="KW-0809">Transit peptide</keyword>
<organism>
    <name type="scientific">Komagataella phaffii (strain GS115 / ATCC 20864)</name>
    <name type="common">Yeast</name>
    <name type="synonym">Pichia pastoris</name>
    <dbReference type="NCBI Taxonomy" id="644223"/>
    <lineage>
        <taxon>Eukaryota</taxon>
        <taxon>Fungi</taxon>
        <taxon>Dikarya</taxon>
        <taxon>Ascomycota</taxon>
        <taxon>Saccharomycotina</taxon>
        <taxon>Pichiomycetes</taxon>
        <taxon>Pichiales</taxon>
        <taxon>Pichiaceae</taxon>
        <taxon>Komagataella</taxon>
    </lineage>
</organism>
<reference key="1">
    <citation type="journal article" date="2009" name="Nat. Biotechnol.">
        <title>Genome sequence of the recombinant protein production host Pichia pastoris.</title>
        <authorList>
            <person name="De Schutter K."/>
            <person name="Lin Y.-C."/>
            <person name="Tiels P."/>
            <person name="Van Hecke A."/>
            <person name="Glinka S."/>
            <person name="Weber-Lehmann J."/>
            <person name="Rouze P."/>
            <person name="Van de Peer Y."/>
            <person name="Callewaert N."/>
        </authorList>
    </citation>
    <scope>NUCLEOTIDE SEQUENCE [LARGE SCALE GENOMIC DNA]</scope>
    <source>
        <strain>GS115 / ATCC 20864</strain>
    </source>
</reference>
<proteinExistence type="inferred from homology"/>
<feature type="transit peptide" description="Mitochondrion" evidence="2">
    <location>
        <begin position="1"/>
        <end position="17"/>
    </location>
</feature>
<feature type="chain" id="PRO_0000405509" description="Mitochondrial zinc maintenance protein 1, mitochondrial">
    <location>
        <begin position="18"/>
        <end position="122"/>
    </location>
</feature>
<feature type="region of interest" description="Disordered" evidence="3">
    <location>
        <begin position="92"/>
        <end position="122"/>
    </location>
</feature>
<feature type="compositionally biased region" description="Basic and acidic residues" evidence="3">
    <location>
        <begin position="92"/>
        <end position="104"/>
    </location>
</feature>
<feature type="compositionally biased region" description="Gly residues" evidence="3">
    <location>
        <begin position="106"/>
        <end position="122"/>
    </location>
</feature>
<sequence>MSQASRALKAYRNALRATSVAFKNDVATLDAARNEIRTHMKSQEDPKGTNRSIDERLKLLDEVTVFLRHNIVQGRKVDEGKYRLNIHKDTELGDNDDIKKKKDGLSNGGFTGCCGGSGAKTT</sequence>
<accession>C4R7H7</accession>
<protein>
    <recommendedName>
        <fullName>Mitochondrial zinc maintenance protein 1, mitochondrial</fullName>
    </recommendedName>
</protein>
<gene>
    <name type="primary">MZM1</name>
    <name type="ordered locus">PAS_chr4_0944</name>
</gene>
<dbReference type="EMBL" id="FN392322">
    <property type="protein sequence ID" value="CAY71552.1"/>
    <property type="molecule type" value="Genomic_DNA"/>
</dbReference>
<dbReference type="RefSeq" id="XP_002493731.1">
    <property type="nucleotide sequence ID" value="XM_002493686.1"/>
</dbReference>
<dbReference type="SMR" id="C4R7H7"/>
<dbReference type="FunCoup" id="C4R7H7">
    <property type="interactions" value="16"/>
</dbReference>
<dbReference type="STRING" id="644223.C4R7H7"/>
<dbReference type="EnsemblFungi" id="CAY71552">
    <property type="protein sequence ID" value="CAY71552"/>
    <property type="gene ID" value="PAS_chr4_0944"/>
</dbReference>
<dbReference type="GeneID" id="8200754"/>
<dbReference type="KEGG" id="ppa:PAS_chr4_0944"/>
<dbReference type="eggNOG" id="ENOG502S6EF">
    <property type="taxonomic scope" value="Eukaryota"/>
</dbReference>
<dbReference type="HOGENOM" id="CLU_147114_2_2_1"/>
<dbReference type="InParanoid" id="C4R7H7"/>
<dbReference type="OMA" id="KYKLRIH"/>
<dbReference type="OrthoDB" id="529194at2759"/>
<dbReference type="Proteomes" id="UP000000314">
    <property type="component" value="Chromosome 4"/>
</dbReference>
<dbReference type="GO" id="GO:0005759">
    <property type="term" value="C:mitochondrial matrix"/>
    <property type="evidence" value="ECO:0007669"/>
    <property type="project" value="UniProtKB-SubCell"/>
</dbReference>
<dbReference type="GO" id="GO:0044183">
    <property type="term" value="F:protein folding chaperone"/>
    <property type="evidence" value="ECO:0007669"/>
    <property type="project" value="TreeGrafter"/>
</dbReference>
<dbReference type="GO" id="GO:0034551">
    <property type="term" value="P:mitochondrial respiratory chain complex III assembly"/>
    <property type="evidence" value="ECO:0007669"/>
    <property type="project" value="InterPro"/>
</dbReference>
<dbReference type="CDD" id="cd20267">
    <property type="entry name" value="Complex1_LYR_LYRM7"/>
    <property type="match status" value="1"/>
</dbReference>
<dbReference type="InterPro" id="IPR045298">
    <property type="entry name" value="Complex1_LYR_LYRM7"/>
</dbReference>
<dbReference type="InterPro" id="IPR050435">
    <property type="entry name" value="MZM1/LYRM7"/>
</dbReference>
<dbReference type="PANTHER" id="PTHR46749">
    <property type="entry name" value="COMPLEX III ASSEMBLY FACTOR LYRM7"/>
    <property type="match status" value="1"/>
</dbReference>
<dbReference type="PANTHER" id="PTHR46749:SF1">
    <property type="entry name" value="COMPLEX III ASSEMBLY FACTOR LYRM7"/>
    <property type="match status" value="1"/>
</dbReference>
<evidence type="ECO:0000250" key="1"/>
<evidence type="ECO:0000255" key="2"/>
<evidence type="ECO:0000256" key="3">
    <source>
        <dbReference type="SAM" id="MobiDB-lite"/>
    </source>
</evidence>
<evidence type="ECO:0000305" key="4"/>
<name>MZM1_KOMPG</name>